<evidence type="ECO:0000256" key="1">
    <source>
        <dbReference type="SAM" id="MobiDB-lite"/>
    </source>
</evidence>
<evidence type="ECO:0000305" key="2"/>
<proteinExistence type="evidence at transcript level"/>
<reference key="1">
    <citation type="journal article" date="1992" name="EMBO J.">
        <title>An extra copy of nimEcyclinB elevates pre-MPF levels and partially suppresses mutation of nimTcdc25 in Aspergillus nidulans.</title>
        <authorList>
            <person name="O'Connell M.J."/>
            <person name="Osmani A.H."/>
            <person name="Morris N.R."/>
            <person name="Osmani S.A."/>
        </authorList>
    </citation>
    <scope>NUCLEOTIDE SEQUENCE [MRNA]</scope>
    <source>
        <strain>GB20</strain>
    </source>
</reference>
<reference key="2">
    <citation type="journal article" date="2005" name="Nature">
        <title>Sequencing of Aspergillus nidulans and comparative analysis with A. fumigatus and A. oryzae.</title>
        <authorList>
            <person name="Galagan J.E."/>
            <person name="Calvo S.E."/>
            <person name="Cuomo C."/>
            <person name="Ma L.-J."/>
            <person name="Wortman J.R."/>
            <person name="Batzoglou S."/>
            <person name="Lee S.-I."/>
            <person name="Bastuerkmen M."/>
            <person name="Spevak C.C."/>
            <person name="Clutterbuck J."/>
            <person name="Kapitonov V."/>
            <person name="Jurka J."/>
            <person name="Scazzocchio C."/>
            <person name="Farman M.L."/>
            <person name="Butler J."/>
            <person name="Purcell S."/>
            <person name="Harris S."/>
            <person name="Braus G.H."/>
            <person name="Draht O."/>
            <person name="Busch S."/>
            <person name="D'Enfert C."/>
            <person name="Bouchier C."/>
            <person name="Goldman G.H."/>
            <person name="Bell-Pedersen D."/>
            <person name="Griffiths-Jones S."/>
            <person name="Doonan J.H."/>
            <person name="Yu J."/>
            <person name="Vienken K."/>
            <person name="Pain A."/>
            <person name="Freitag M."/>
            <person name="Selker E.U."/>
            <person name="Archer D.B."/>
            <person name="Penalva M.A."/>
            <person name="Oakley B.R."/>
            <person name="Momany M."/>
            <person name="Tanaka T."/>
            <person name="Kumagai T."/>
            <person name="Asai K."/>
            <person name="Machida M."/>
            <person name="Nierman W.C."/>
            <person name="Denning D.W."/>
            <person name="Caddick M.X."/>
            <person name="Hynes M."/>
            <person name="Paoletti M."/>
            <person name="Fischer R."/>
            <person name="Miller B.L."/>
            <person name="Dyer P.S."/>
            <person name="Sachs M.S."/>
            <person name="Osmani S.A."/>
            <person name="Birren B.W."/>
        </authorList>
    </citation>
    <scope>NUCLEOTIDE SEQUENCE [LARGE SCALE GENOMIC DNA]</scope>
    <source>
        <strain>FGSC A4 / ATCC 38163 / CBS 112.46 / NRRL 194 / M139</strain>
    </source>
</reference>
<reference key="3">
    <citation type="journal article" date="2009" name="Fungal Genet. Biol.">
        <title>The 2008 update of the Aspergillus nidulans genome annotation: a community effort.</title>
        <authorList>
            <person name="Wortman J.R."/>
            <person name="Gilsenan J.M."/>
            <person name="Joardar V."/>
            <person name="Deegan J."/>
            <person name="Clutterbuck J."/>
            <person name="Andersen M.R."/>
            <person name="Archer D."/>
            <person name="Bencina M."/>
            <person name="Braus G."/>
            <person name="Coutinho P."/>
            <person name="von Dohren H."/>
            <person name="Doonan J."/>
            <person name="Driessen A.J."/>
            <person name="Durek P."/>
            <person name="Espeso E."/>
            <person name="Fekete E."/>
            <person name="Flipphi M."/>
            <person name="Estrada C.G."/>
            <person name="Geysens S."/>
            <person name="Goldman G."/>
            <person name="de Groot P.W."/>
            <person name="Hansen K."/>
            <person name="Harris S.D."/>
            <person name="Heinekamp T."/>
            <person name="Helmstaedt K."/>
            <person name="Henrissat B."/>
            <person name="Hofmann G."/>
            <person name="Homan T."/>
            <person name="Horio T."/>
            <person name="Horiuchi H."/>
            <person name="James S."/>
            <person name="Jones M."/>
            <person name="Karaffa L."/>
            <person name="Karanyi Z."/>
            <person name="Kato M."/>
            <person name="Keller N."/>
            <person name="Kelly D.E."/>
            <person name="Kiel J.A."/>
            <person name="Kim J.M."/>
            <person name="van der Klei I.J."/>
            <person name="Klis F.M."/>
            <person name="Kovalchuk A."/>
            <person name="Krasevec N."/>
            <person name="Kubicek C.P."/>
            <person name="Liu B."/>
            <person name="Maccabe A."/>
            <person name="Meyer V."/>
            <person name="Mirabito P."/>
            <person name="Miskei M."/>
            <person name="Mos M."/>
            <person name="Mullins J."/>
            <person name="Nelson D.R."/>
            <person name="Nielsen J."/>
            <person name="Oakley B.R."/>
            <person name="Osmani S.A."/>
            <person name="Pakula T."/>
            <person name="Paszewski A."/>
            <person name="Paulsen I."/>
            <person name="Pilsyk S."/>
            <person name="Pocsi I."/>
            <person name="Punt P.J."/>
            <person name="Ram A.F."/>
            <person name="Ren Q."/>
            <person name="Robellet X."/>
            <person name="Robson G."/>
            <person name="Seiboth B."/>
            <person name="van Solingen P."/>
            <person name="Specht T."/>
            <person name="Sun J."/>
            <person name="Taheri-Talesh N."/>
            <person name="Takeshita N."/>
            <person name="Ussery D."/>
            <person name="vanKuyk P.A."/>
            <person name="Visser H."/>
            <person name="van de Vondervoort P.J."/>
            <person name="de Vries R.P."/>
            <person name="Walton J."/>
            <person name="Xiang X."/>
            <person name="Xiong Y."/>
            <person name="Zeng A.P."/>
            <person name="Brandt B.W."/>
            <person name="Cornell M.J."/>
            <person name="van den Hondel C.A."/>
            <person name="Visser J."/>
            <person name="Oliver S.G."/>
            <person name="Turner G."/>
        </authorList>
    </citation>
    <scope>GENOME REANNOTATION</scope>
    <source>
        <strain>FGSC A4 / ATCC 38163 / CBS 112.46 / NRRL 194 / M139</strain>
    </source>
</reference>
<sequence length="478" mass="53522">MNENDENGPSTRLTRAKAAALTTDAPAANGALKKPLQTKKAATGANGTQRKRAALGDVSNVGKADNGETKDAKKATSKTGLTSKATMQSGGVQKLSRSNLSRTAVGAKDNNVKKPATEAKRPGSGSGMGSAMKRTSSQKSLQEKTIQQEEPPRKKVDIEKVVEKQAEAVSVKGDVKAGAQTEELEKPQDFVADLDTEDLDDPLMAAEYVVEIFDYLRELEMETLPNPDYIDHQPDLEWKMRGILVDWLIEVHTRFRLLPETLFLAVNIIDRFLSAEVVALDRLQLVGVAAMFIASKYEEVLSPHVANFSHVADETFSDKEILDAERHILATLEYNMSYPNPMNFLRRISKADNYDIQTRTLGKYLMEISLLDHRFLGYPQSQIGAAAMYLARLILDRGPWDATLAHYAGYTEEEIDEVFRLMVDYLHRPVCHEAFFKKYASKKFLKASIMTRQWAKKYHHLYIDSALTEPYNSIKDNE</sequence>
<organism>
    <name type="scientific">Emericella nidulans (strain FGSC A4 / ATCC 38163 / CBS 112.46 / NRRL 194 / M139)</name>
    <name type="common">Aspergillus nidulans</name>
    <dbReference type="NCBI Taxonomy" id="227321"/>
    <lineage>
        <taxon>Eukaryota</taxon>
        <taxon>Fungi</taxon>
        <taxon>Dikarya</taxon>
        <taxon>Ascomycota</taxon>
        <taxon>Pezizomycotina</taxon>
        <taxon>Eurotiomycetes</taxon>
        <taxon>Eurotiomycetidae</taxon>
        <taxon>Eurotiales</taxon>
        <taxon>Aspergillaceae</taxon>
        <taxon>Aspergillus</taxon>
        <taxon>Aspergillus subgen. Nidulantes</taxon>
    </lineage>
</organism>
<name>CG21_EMENI</name>
<feature type="chain" id="PRO_0000080410" description="G2/mitotic-specific cyclin-B">
    <location>
        <begin position="1"/>
        <end position="478"/>
    </location>
</feature>
<feature type="region of interest" description="Disordered" evidence="1">
    <location>
        <begin position="1"/>
        <end position="153"/>
    </location>
</feature>
<feature type="compositionally biased region" description="Low complexity" evidence="1">
    <location>
        <begin position="16"/>
        <end position="31"/>
    </location>
</feature>
<feature type="compositionally biased region" description="Basic and acidic residues" evidence="1">
    <location>
        <begin position="65"/>
        <end position="74"/>
    </location>
</feature>
<feature type="compositionally biased region" description="Polar residues" evidence="1">
    <location>
        <begin position="77"/>
        <end position="102"/>
    </location>
</feature>
<feature type="compositionally biased region" description="Basic and acidic residues" evidence="1">
    <location>
        <begin position="110"/>
        <end position="121"/>
    </location>
</feature>
<feature type="compositionally biased region" description="Polar residues" evidence="1">
    <location>
        <begin position="133"/>
        <end position="145"/>
    </location>
</feature>
<keyword id="KW-0131">Cell cycle</keyword>
<keyword id="KW-0132">Cell division</keyword>
<keyword id="KW-0195">Cyclin</keyword>
<keyword id="KW-0498">Mitosis</keyword>
<keyword id="KW-1185">Reference proteome</keyword>
<gene>
    <name type="primary">nimE</name>
    <name type="ORF">AN3648</name>
</gene>
<comment type="function">
    <text>Essential for the control of the cell cycle at the G2/M (mitosis) transition. Interacts with the CDC2 protein kinase to form MPF. G2/M cyclins accumulate steadily during G2 and are abruptly destroyed at mitosis.</text>
</comment>
<comment type="similarity">
    <text evidence="2">Belongs to the cyclin family. Cyclin AB subfamily.</text>
</comment>
<comment type="sequence caution" evidence="2">
    <conflict type="erroneous gene model prediction">
        <sequence resource="EMBL-CDS" id="CBF75695"/>
    </conflict>
</comment>
<protein>
    <recommendedName>
        <fullName>G2/mitotic-specific cyclin-B</fullName>
    </recommendedName>
</protein>
<dbReference type="EMBL" id="X64602">
    <property type="protein sequence ID" value="CAA45886.1"/>
    <property type="molecule type" value="mRNA"/>
</dbReference>
<dbReference type="EMBL" id="AACD01000061">
    <property type="protein sequence ID" value="EAA59856.1"/>
    <property type="molecule type" value="Genomic_DNA"/>
</dbReference>
<dbReference type="EMBL" id="BN001302">
    <property type="protein sequence ID" value="CBF75695.1"/>
    <property type="status" value="ALT_SEQ"/>
    <property type="molecule type" value="Genomic_DNA"/>
</dbReference>
<dbReference type="PIR" id="S22694">
    <property type="entry name" value="S22694"/>
</dbReference>
<dbReference type="RefSeq" id="XP_661252.1">
    <property type="nucleotide sequence ID" value="XM_656160.1"/>
</dbReference>
<dbReference type="SMR" id="P30284"/>
<dbReference type="FunCoup" id="P30284">
    <property type="interactions" value="500"/>
</dbReference>
<dbReference type="STRING" id="227321.P30284"/>
<dbReference type="GeneID" id="2873072"/>
<dbReference type="KEGG" id="ani:ANIA_03648"/>
<dbReference type="eggNOG" id="KOG0653">
    <property type="taxonomic scope" value="Eukaryota"/>
</dbReference>
<dbReference type="HOGENOM" id="CLU_020695_10_2_1"/>
<dbReference type="InParanoid" id="P30284"/>
<dbReference type="OrthoDB" id="5590282at2759"/>
<dbReference type="Proteomes" id="UP000000560">
    <property type="component" value="Chromosome II"/>
</dbReference>
<dbReference type="GO" id="GO:0000307">
    <property type="term" value="C:cyclin-dependent protein kinase holoenzyme complex"/>
    <property type="evidence" value="ECO:0000318"/>
    <property type="project" value="GO_Central"/>
</dbReference>
<dbReference type="GO" id="GO:0005737">
    <property type="term" value="C:cytoplasm"/>
    <property type="evidence" value="ECO:0000318"/>
    <property type="project" value="GO_Central"/>
</dbReference>
<dbReference type="GO" id="GO:0005815">
    <property type="term" value="C:microtubule organizing center"/>
    <property type="evidence" value="ECO:0000318"/>
    <property type="project" value="GO_Central"/>
</dbReference>
<dbReference type="GO" id="GO:0005634">
    <property type="term" value="C:nucleus"/>
    <property type="evidence" value="ECO:0000318"/>
    <property type="project" value="GO_Central"/>
</dbReference>
<dbReference type="GO" id="GO:0016538">
    <property type="term" value="F:cyclin-dependent protein serine/threonine kinase regulator activity"/>
    <property type="evidence" value="ECO:0000318"/>
    <property type="project" value="GO_Central"/>
</dbReference>
<dbReference type="GO" id="GO:0051301">
    <property type="term" value="P:cell division"/>
    <property type="evidence" value="ECO:0007669"/>
    <property type="project" value="UniProtKB-KW"/>
</dbReference>
<dbReference type="GO" id="GO:0000082">
    <property type="term" value="P:G1/S transition of mitotic cell cycle"/>
    <property type="evidence" value="ECO:0000318"/>
    <property type="project" value="GO_Central"/>
</dbReference>
<dbReference type="GO" id="GO:0007089">
    <property type="term" value="P:traversing start control point of mitotic cell cycle"/>
    <property type="evidence" value="ECO:0000318"/>
    <property type="project" value="GO_Central"/>
</dbReference>
<dbReference type="CDD" id="cd20568">
    <property type="entry name" value="CYCLIN_CLBs_yeast_rpt1"/>
    <property type="match status" value="1"/>
</dbReference>
<dbReference type="CDD" id="cd20512">
    <property type="entry name" value="CYCLIN_CLBs_yeast_rpt2"/>
    <property type="match status" value="1"/>
</dbReference>
<dbReference type="FunFam" id="1.10.472.10:FF:000001">
    <property type="entry name" value="G2/mitotic-specific cyclin"/>
    <property type="match status" value="1"/>
</dbReference>
<dbReference type="Gene3D" id="1.10.472.10">
    <property type="entry name" value="Cyclin-like"/>
    <property type="match status" value="2"/>
</dbReference>
<dbReference type="InterPro" id="IPR039361">
    <property type="entry name" value="Cyclin"/>
</dbReference>
<dbReference type="InterPro" id="IPR013763">
    <property type="entry name" value="Cyclin-like_dom"/>
</dbReference>
<dbReference type="InterPro" id="IPR036915">
    <property type="entry name" value="Cyclin-like_sf"/>
</dbReference>
<dbReference type="InterPro" id="IPR046965">
    <property type="entry name" value="Cyclin_A/B-like"/>
</dbReference>
<dbReference type="InterPro" id="IPR004367">
    <property type="entry name" value="Cyclin_C-dom"/>
</dbReference>
<dbReference type="InterPro" id="IPR006671">
    <property type="entry name" value="Cyclin_N"/>
</dbReference>
<dbReference type="InterPro" id="IPR048258">
    <property type="entry name" value="Cyclins_cyclin-box"/>
</dbReference>
<dbReference type="PANTHER" id="PTHR10177">
    <property type="entry name" value="CYCLINS"/>
    <property type="match status" value="1"/>
</dbReference>
<dbReference type="Pfam" id="PF02984">
    <property type="entry name" value="Cyclin_C"/>
    <property type="match status" value="1"/>
</dbReference>
<dbReference type="Pfam" id="PF00134">
    <property type="entry name" value="Cyclin_N"/>
    <property type="match status" value="1"/>
</dbReference>
<dbReference type="PIRSF" id="PIRSF001771">
    <property type="entry name" value="Cyclin_A_B_D_E"/>
    <property type="match status" value="1"/>
</dbReference>
<dbReference type="SMART" id="SM00385">
    <property type="entry name" value="CYCLIN"/>
    <property type="match status" value="2"/>
</dbReference>
<dbReference type="SMART" id="SM01332">
    <property type="entry name" value="Cyclin_C"/>
    <property type="match status" value="1"/>
</dbReference>
<dbReference type="SUPFAM" id="SSF47954">
    <property type="entry name" value="Cyclin-like"/>
    <property type="match status" value="2"/>
</dbReference>
<dbReference type="PROSITE" id="PS00292">
    <property type="entry name" value="CYCLINS"/>
    <property type="match status" value="1"/>
</dbReference>
<accession>P30284</accession>
<accession>C8V3W2</accession>
<accession>Q5B732</accession>